<keyword id="KW-1185">Reference proteome</keyword>
<keyword id="KW-0687">Ribonucleoprotein</keyword>
<keyword id="KW-0689">Ribosomal protein</keyword>
<keyword id="KW-0694">RNA-binding</keyword>
<keyword id="KW-0699">rRNA-binding</keyword>
<organism>
    <name type="scientific">Escherichia coli O127:H6 (strain E2348/69 / EPEC)</name>
    <dbReference type="NCBI Taxonomy" id="574521"/>
    <lineage>
        <taxon>Bacteria</taxon>
        <taxon>Pseudomonadati</taxon>
        <taxon>Pseudomonadota</taxon>
        <taxon>Gammaproteobacteria</taxon>
        <taxon>Enterobacterales</taxon>
        <taxon>Enterobacteriaceae</taxon>
        <taxon>Escherichia</taxon>
    </lineage>
</organism>
<proteinExistence type="inferred from homology"/>
<protein>
    <recommendedName>
        <fullName evidence="1">Large ribosomal subunit protein bL25</fullName>
    </recommendedName>
    <alternativeName>
        <fullName evidence="2">50S ribosomal protein L25</fullName>
    </alternativeName>
</protein>
<sequence length="94" mass="10692">MFTINAEVRKEQGKGASRRLRAANKFPAIIYGGKEAPLAVELDHDKVMNMQVKAEFYSEVLTIVVDGKEIKVKAQDVQRHPYKPKLLHIDFVRA</sequence>
<accession>B7UFK2</accession>
<gene>
    <name evidence="1" type="primary">rplY</name>
    <name type="ordered locus">E2348C_2332</name>
</gene>
<comment type="function">
    <text evidence="1">This is one of the proteins that binds to the 5S RNA in the ribosome where it forms part of the central protuberance.</text>
</comment>
<comment type="subunit">
    <text evidence="1">Part of the 50S ribosomal subunit; part of the 5S rRNA/L5/L18/L25 subcomplex. Contacts the 5S rRNA. Binds to the 5S rRNA independently of L5 and L18.</text>
</comment>
<comment type="similarity">
    <text evidence="1">Belongs to the bacterial ribosomal protein bL25 family.</text>
</comment>
<dbReference type="EMBL" id="FM180568">
    <property type="protein sequence ID" value="CAS09880.1"/>
    <property type="molecule type" value="Genomic_DNA"/>
</dbReference>
<dbReference type="RefSeq" id="WP_000494186.1">
    <property type="nucleotide sequence ID" value="NC_011601.1"/>
</dbReference>
<dbReference type="SMR" id="B7UFK2"/>
<dbReference type="KEGG" id="ecg:E2348C_2332"/>
<dbReference type="HOGENOM" id="CLU_137946_0_0_6"/>
<dbReference type="Proteomes" id="UP000008205">
    <property type="component" value="Chromosome"/>
</dbReference>
<dbReference type="GO" id="GO:0022625">
    <property type="term" value="C:cytosolic large ribosomal subunit"/>
    <property type="evidence" value="ECO:0007669"/>
    <property type="project" value="TreeGrafter"/>
</dbReference>
<dbReference type="GO" id="GO:0008097">
    <property type="term" value="F:5S rRNA binding"/>
    <property type="evidence" value="ECO:0007669"/>
    <property type="project" value="InterPro"/>
</dbReference>
<dbReference type="GO" id="GO:0003735">
    <property type="term" value="F:structural constituent of ribosome"/>
    <property type="evidence" value="ECO:0007669"/>
    <property type="project" value="InterPro"/>
</dbReference>
<dbReference type="GO" id="GO:0006412">
    <property type="term" value="P:translation"/>
    <property type="evidence" value="ECO:0007669"/>
    <property type="project" value="UniProtKB-UniRule"/>
</dbReference>
<dbReference type="CDD" id="cd00495">
    <property type="entry name" value="Ribosomal_L25_TL5_CTC"/>
    <property type="match status" value="1"/>
</dbReference>
<dbReference type="FunFam" id="2.40.240.10:FF:000002">
    <property type="entry name" value="50S ribosomal protein L25"/>
    <property type="match status" value="1"/>
</dbReference>
<dbReference type="Gene3D" id="2.40.240.10">
    <property type="entry name" value="Ribosomal Protein L25, Chain P"/>
    <property type="match status" value="1"/>
</dbReference>
<dbReference type="HAMAP" id="MF_01336">
    <property type="entry name" value="Ribosomal_bL25"/>
    <property type="match status" value="1"/>
</dbReference>
<dbReference type="InterPro" id="IPR020056">
    <property type="entry name" value="Rbsml_bL25/Gln-tRNA_synth_N"/>
</dbReference>
<dbReference type="InterPro" id="IPR011035">
    <property type="entry name" value="Ribosomal_bL25/Gln-tRNA_synth"/>
</dbReference>
<dbReference type="InterPro" id="IPR020055">
    <property type="entry name" value="Ribosomal_bL25_short"/>
</dbReference>
<dbReference type="InterPro" id="IPR029751">
    <property type="entry name" value="Ribosomal_L25_dom"/>
</dbReference>
<dbReference type="InterPro" id="IPR020930">
    <property type="entry name" value="Ribosomal_uL5_bac-type"/>
</dbReference>
<dbReference type="NCBIfam" id="NF004612">
    <property type="entry name" value="PRK05943.1"/>
    <property type="match status" value="1"/>
</dbReference>
<dbReference type="PANTHER" id="PTHR33284">
    <property type="entry name" value="RIBOSOMAL PROTEIN L25/GLN-TRNA SYNTHETASE, ANTI-CODON-BINDING DOMAIN-CONTAINING PROTEIN"/>
    <property type="match status" value="1"/>
</dbReference>
<dbReference type="PANTHER" id="PTHR33284:SF1">
    <property type="entry name" value="RIBOSOMAL PROTEIN L25_GLN-TRNA SYNTHETASE, ANTI-CODON-BINDING DOMAIN-CONTAINING PROTEIN"/>
    <property type="match status" value="1"/>
</dbReference>
<dbReference type="Pfam" id="PF01386">
    <property type="entry name" value="Ribosomal_L25p"/>
    <property type="match status" value="1"/>
</dbReference>
<dbReference type="SUPFAM" id="SSF50715">
    <property type="entry name" value="Ribosomal protein L25-like"/>
    <property type="match status" value="1"/>
</dbReference>
<evidence type="ECO:0000255" key="1">
    <source>
        <dbReference type="HAMAP-Rule" id="MF_01336"/>
    </source>
</evidence>
<evidence type="ECO:0000305" key="2"/>
<feature type="chain" id="PRO_1000166190" description="Large ribosomal subunit protein bL25">
    <location>
        <begin position="1"/>
        <end position="94"/>
    </location>
</feature>
<reference key="1">
    <citation type="journal article" date="2009" name="J. Bacteriol.">
        <title>Complete genome sequence and comparative genome analysis of enteropathogenic Escherichia coli O127:H6 strain E2348/69.</title>
        <authorList>
            <person name="Iguchi A."/>
            <person name="Thomson N.R."/>
            <person name="Ogura Y."/>
            <person name="Saunders D."/>
            <person name="Ooka T."/>
            <person name="Henderson I.R."/>
            <person name="Harris D."/>
            <person name="Asadulghani M."/>
            <person name="Kurokawa K."/>
            <person name="Dean P."/>
            <person name="Kenny B."/>
            <person name="Quail M.A."/>
            <person name="Thurston S."/>
            <person name="Dougan G."/>
            <person name="Hayashi T."/>
            <person name="Parkhill J."/>
            <person name="Frankel G."/>
        </authorList>
    </citation>
    <scope>NUCLEOTIDE SEQUENCE [LARGE SCALE GENOMIC DNA]</scope>
    <source>
        <strain>E2348/69 / EPEC</strain>
    </source>
</reference>
<name>RL25_ECO27</name>